<keyword id="KW-1185">Reference proteome</keyword>
<keyword id="KW-0687">Ribonucleoprotein</keyword>
<keyword id="KW-0689">Ribosomal protein</keyword>
<keyword id="KW-0694">RNA-binding</keyword>
<keyword id="KW-0699">rRNA-binding</keyword>
<sequence>MTMEAKAILRTARISPQKARLVADQVRGLSAERAVNLLKFSDKKAAHLIKKVVESAIANAENNQGADVDELKVKTIMVDEGPSLKRFMARAKGRGTRILKRTSHITVVVGAAK</sequence>
<comment type="function">
    <text evidence="1">This protein binds specifically to 23S rRNA; its binding is stimulated by other ribosomal proteins, e.g. L4, L17, and L20. It is important during the early stages of 50S assembly. It makes multiple contacts with different domains of the 23S rRNA in the assembled 50S subunit and ribosome (By similarity).</text>
</comment>
<comment type="function">
    <text evidence="1">The globular domain of the protein is located near the polypeptide exit tunnel on the outside of the subunit, while an extended beta-hairpin is found that lines the wall of the exit tunnel in the center of the 70S ribosome.</text>
</comment>
<comment type="subunit">
    <text evidence="1">Part of the 50S ribosomal subunit.</text>
</comment>
<comment type="similarity">
    <text evidence="1">Belongs to the universal ribosomal protein uL22 family.</text>
</comment>
<reference key="1">
    <citation type="journal article" date="2002" name="Nature">
        <title>Comparison of the genomes of two Xanthomonas pathogens with differing host specificities.</title>
        <authorList>
            <person name="da Silva A.C.R."/>
            <person name="Ferro J.A."/>
            <person name="Reinach F.C."/>
            <person name="Farah C.S."/>
            <person name="Furlan L.R."/>
            <person name="Quaggio R.B."/>
            <person name="Monteiro-Vitorello C.B."/>
            <person name="Van Sluys M.A."/>
            <person name="Almeida N.F. Jr."/>
            <person name="Alves L.M.C."/>
            <person name="do Amaral A.M."/>
            <person name="Bertolini M.C."/>
            <person name="Camargo L.E.A."/>
            <person name="Camarotte G."/>
            <person name="Cannavan F."/>
            <person name="Cardozo J."/>
            <person name="Chambergo F."/>
            <person name="Ciapina L.P."/>
            <person name="Cicarelli R.M.B."/>
            <person name="Coutinho L.L."/>
            <person name="Cursino-Santos J.R."/>
            <person name="El-Dorry H."/>
            <person name="Faria J.B."/>
            <person name="Ferreira A.J.S."/>
            <person name="Ferreira R.C.C."/>
            <person name="Ferro M.I.T."/>
            <person name="Formighieri E.F."/>
            <person name="Franco M.C."/>
            <person name="Greggio C.C."/>
            <person name="Gruber A."/>
            <person name="Katsuyama A.M."/>
            <person name="Kishi L.T."/>
            <person name="Leite R.P."/>
            <person name="Lemos E.G.M."/>
            <person name="Lemos M.V.F."/>
            <person name="Locali E.C."/>
            <person name="Machado M.A."/>
            <person name="Madeira A.M.B.N."/>
            <person name="Martinez-Rossi N.M."/>
            <person name="Martins E.C."/>
            <person name="Meidanis J."/>
            <person name="Menck C.F.M."/>
            <person name="Miyaki C.Y."/>
            <person name="Moon D.H."/>
            <person name="Moreira L.M."/>
            <person name="Novo M.T.M."/>
            <person name="Okura V.K."/>
            <person name="Oliveira M.C."/>
            <person name="Oliveira V.R."/>
            <person name="Pereira H.A."/>
            <person name="Rossi A."/>
            <person name="Sena J.A.D."/>
            <person name="Silva C."/>
            <person name="de Souza R.F."/>
            <person name="Spinola L.A.F."/>
            <person name="Takita M.A."/>
            <person name="Tamura R.E."/>
            <person name="Teixeira E.C."/>
            <person name="Tezza R.I.D."/>
            <person name="Trindade dos Santos M."/>
            <person name="Truffi D."/>
            <person name="Tsai S.M."/>
            <person name="White F.F."/>
            <person name="Setubal J.C."/>
            <person name="Kitajima J.P."/>
        </authorList>
    </citation>
    <scope>NUCLEOTIDE SEQUENCE [LARGE SCALE GENOMIC DNA]</scope>
    <source>
        <strain>ATCC 33913 / DSM 3586 / NCPPB 528 / LMG 568 / P 25</strain>
    </source>
</reference>
<feature type="chain" id="PRO_0000125266" description="Large ribosomal subunit protein uL22">
    <location>
        <begin position="1"/>
        <end position="113"/>
    </location>
</feature>
<protein>
    <recommendedName>
        <fullName evidence="1">Large ribosomal subunit protein uL22</fullName>
    </recommendedName>
    <alternativeName>
        <fullName evidence="2">50S ribosomal protein L22</fullName>
    </alternativeName>
</protein>
<accession>Q7CLU6</accession>
<gene>
    <name evidence="1" type="primary">rplV</name>
    <name type="ordered locus">XCC0900</name>
</gene>
<proteinExistence type="inferred from homology"/>
<organism>
    <name type="scientific">Xanthomonas campestris pv. campestris (strain ATCC 33913 / DSM 3586 / NCPPB 528 / LMG 568 / P 25)</name>
    <dbReference type="NCBI Taxonomy" id="190485"/>
    <lineage>
        <taxon>Bacteria</taxon>
        <taxon>Pseudomonadati</taxon>
        <taxon>Pseudomonadota</taxon>
        <taxon>Gammaproteobacteria</taxon>
        <taxon>Lysobacterales</taxon>
        <taxon>Lysobacteraceae</taxon>
        <taxon>Xanthomonas</taxon>
    </lineage>
</organism>
<name>RL22_XANCP</name>
<dbReference type="EMBL" id="AE008922">
    <property type="protein sequence ID" value="AAM40210.1"/>
    <property type="molecule type" value="Genomic_DNA"/>
</dbReference>
<dbReference type="RefSeq" id="NP_636286.1">
    <property type="nucleotide sequence ID" value="NC_003902.1"/>
</dbReference>
<dbReference type="SMR" id="Q7CLU6"/>
<dbReference type="STRING" id="190485.XCC0900"/>
<dbReference type="EnsemblBacteria" id="AAM40210">
    <property type="protein sequence ID" value="AAM40210"/>
    <property type="gene ID" value="XCC0900"/>
</dbReference>
<dbReference type="KEGG" id="xcc:XCC0900"/>
<dbReference type="PATRIC" id="fig|190485.4.peg.972"/>
<dbReference type="eggNOG" id="COG0091">
    <property type="taxonomic scope" value="Bacteria"/>
</dbReference>
<dbReference type="HOGENOM" id="CLU_083987_3_3_6"/>
<dbReference type="OrthoDB" id="9805969at2"/>
<dbReference type="PRO" id="PR:Q7CLU6"/>
<dbReference type="Proteomes" id="UP000001010">
    <property type="component" value="Chromosome"/>
</dbReference>
<dbReference type="GO" id="GO:0022625">
    <property type="term" value="C:cytosolic large ribosomal subunit"/>
    <property type="evidence" value="ECO:0000318"/>
    <property type="project" value="GO_Central"/>
</dbReference>
<dbReference type="GO" id="GO:0019843">
    <property type="term" value="F:rRNA binding"/>
    <property type="evidence" value="ECO:0007669"/>
    <property type="project" value="UniProtKB-UniRule"/>
</dbReference>
<dbReference type="GO" id="GO:0003735">
    <property type="term" value="F:structural constituent of ribosome"/>
    <property type="evidence" value="ECO:0000318"/>
    <property type="project" value="GO_Central"/>
</dbReference>
<dbReference type="GO" id="GO:0006412">
    <property type="term" value="P:translation"/>
    <property type="evidence" value="ECO:0000318"/>
    <property type="project" value="GO_Central"/>
</dbReference>
<dbReference type="CDD" id="cd00336">
    <property type="entry name" value="Ribosomal_L22"/>
    <property type="match status" value="1"/>
</dbReference>
<dbReference type="FunFam" id="3.90.470.10:FF:000001">
    <property type="entry name" value="50S ribosomal protein L22"/>
    <property type="match status" value="1"/>
</dbReference>
<dbReference type="Gene3D" id="3.90.470.10">
    <property type="entry name" value="Ribosomal protein L22/L17"/>
    <property type="match status" value="1"/>
</dbReference>
<dbReference type="HAMAP" id="MF_01331_B">
    <property type="entry name" value="Ribosomal_uL22_B"/>
    <property type="match status" value="1"/>
</dbReference>
<dbReference type="InterPro" id="IPR001063">
    <property type="entry name" value="Ribosomal_uL22"/>
</dbReference>
<dbReference type="InterPro" id="IPR005727">
    <property type="entry name" value="Ribosomal_uL22_bac/chlpt-type"/>
</dbReference>
<dbReference type="InterPro" id="IPR047867">
    <property type="entry name" value="Ribosomal_uL22_bac/org-type"/>
</dbReference>
<dbReference type="InterPro" id="IPR018260">
    <property type="entry name" value="Ribosomal_uL22_CS"/>
</dbReference>
<dbReference type="InterPro" id="IPR036394">
    <property type="entry name" value="Ribosomal_uL22_sf"/>
</dbReference>
<dbReference type="NCBIfam" id="TIGR01044">
    <property type="entry name" value="rplV_bact"/>
    <property type="match status" value="1"/>
</dbReference>
<dbReference type="PANTHER" id="PTHR13501">
    <property type="entry name" value="CHLOROPLAST 50S RIBOSOMAL PROTEIN L22-RELATED"/>
    <property type="match status" value="1"/>
</dbReference>
<dbReference type="PANTHER" id="PTHR13501:SF8">
    <property type="entry name" value="LARGE RIBOSOMAL SUBUNIT PROTEIN UL22M"/>
    <property type="match status" value="1"/>
</dbReference>
<dbReference type="Pfam" id="PF00237">
    <property type="entry name" value="Ribosomal_L22"/>
    <property type="match status" value="1"/>
</dbReference>
<dbReference type="SUPFAM" id="SSF54843">
    <property type="entry name" value="Ribosomal protein L22"/>
    <property type="match status" value="1"/>
</dbReference>
<dbReference type="PROSITE" id="PS00464">
    <property type="entry name" value="RIBOSOMAL_L22"/>
    <property type="match status" value="1"/>
</dbReference>
<evidence type="ECO:0000255" key="1">
    <source>
        <dbReference type="HAMAP-Rule" id="MF_01331"/>
    </source>
</evidence>
<evidence type="ECO:0000305" key="2"/>